<organism>
    <name type="scientific">Fusobacterium nucleatum subsp. nucleatum (strain ATCC 25586 / DSM 15643 / BCRC 10681 / CIP 101130 / JCM 8532 / KCTC 2640 / LMG 13131 / VPI 4355)</name>
    <dbReference type="NCBI Taxonomy" id="190304"/>
    <lineage>
        <taxon>Bacteria</taxon>
        <taxon>Fusobacteriati</taxon>
        <taxon>Fusobacteriota</taxon>
        <taxon>Fusobacteriia</taxon>
        <taxon>Fusobacteriales</taxon>
        <taxon>Fusobacteriaceae</taxon>
        <taxon>Fusobacterium</taxon>
    </lineage>
</organism>
<feature type="chain" id="PRO_0000147165" description="tRNA(Met) cytidine acetate ligase">
    <location>
        <begin position="1"/>
        <end position="396"/>
    </location>
</feature>
<feature type="binding site" evidence="1">
    <location>
        <begin position="9"/>
        <end position="22"/>
    </location>
    <ligand>
        <name>ATP</name>
        <dbReference type="ChEBI" id="CHEBI:30616"/>
    </ligand>
</feature>
<feature type="binding site" evidence="1">
    <location>
        <position position="103"/>
    </location>
    <ligand>
        <name>ATP</name>
        <dbReference type="ChEBI" id="CHEBI:30616"/>
    </ligand>
</feature>
<feature type="binding site" evidence="1">
    <location>
        <position position="154"/>
    </location>
    <ligand>
        <name>ATP</name>
        <dbReference type="ChEBI" id="CHEBI:30616"/>
    </ligand>
</feature>
<feature type="binding site" evidence="1">
    <location>
        <position position="179"/>
    </location>
    <ligand>
        <name>ATP</name>
        <dbReference type="ChEBI" id="CHEBI:30616"/>
    </ligand>
</feature>
<dbReference type="EC" id="6.3.4.-" evidence="1"/>
<dbReference type="EMBL" id="AE009951">
    <property type="protein sequence ID" value="AAL94928.1"/>
    <property type="molecule type" value="Genomic_DNA"/>
</dbReference>
<dbReference type="RefSeq" id="NP_603629.1">
    <property type="nucleotide sequence ID" value="NC_003454.1"/>
</dbReference>
<dbReference type="RefSeq" id="WP_005902445.1">
    <property type="nucleotide sequence ID" value="NZ_OZ209243.1"/>
</dbReference>
<dbReference type="SMR" id="Q8RFG6"/>
<dbReference type="FunCoup" id="Q8RFG6">
    <property type="interactions" value="14"/>
</dbReference>
<dbReference type="STRING" id="190304.FN0732"/>
<dbReference type="PaxDb" id="190304-FN0732"/>
<dbReference type="EnsemblBacteria" id="AAL94928">
    <property type="protein sequence ID" value="AAL94928"/>
    <property type="gene ID" value="FN0732"/>
</dbReference>
<dbReference type="KEGG" id="fnu:FN0732"/>
<dbReference type="PATRIC" id="fig|190304.8.peg.1295"/>
<dbReference type="eggNOG" id="COG1323">
    <property type="taxonomic scope" value="Bacteria"/>
</dbReference>
<dbReference type="HOGENOM" id="CLU_038915_0_0_0"/>
<dbReference type="InParanoid" id="Q8RFG6"/>
<dbReference type="BioCyc" id="FNUC190304:G1FZS-1318-MONOMER"/>
<dbReference type="Proteomes" id="UP000002521">
    <property type="component" value="Chromosome"/>
</dbReference>
<dbReference type="GO" id="GO:0005737">
    <property type="term" value="C:cytoplasm"/>
    <property type="evidence" value="ECO:0007669"/>
    <property type="project" value="UniProtKB-SubCell"/>
</dbReference>
<dbReference type="GO" id="GO:0005524">
    <property type="term" value="F:ATP binding"/>
    <property type="evidence" value="ECO:0007669"/>
    <property type="project" value="UniProtKB-KW"/>
</dbReference>
<dbReference type="GO" id="GO:0016879">
    <property type="term" value="F:ligase activity, forming carbon-nitrogen bonds"/>
    <property type="evidence" value="ECO:0007669"/>
    <property type="project" value="UniProtKB-UniRule"/>
</dbReference>
<dbReference type="GO" id="GO:0000049">
    <property type="term" value="F:tRNA binding"/>
    <property type="evidence" value="ECO:0007669"/>
    <property type="project" value="UniProtKB-KW"/>
</dbReference>
<dbReference type="GO" id="GO:0006400">
    <property type="term" value="P:tRNA modification"/>
    <property type="evidence" value="ECO:0007669"/>
    <property type="project" value="UniProtKB-UniRule"/>
</dbReference>
<dbReference type="Gene3D" id="3.40.50.620">
    <property type="entry name" value="HUPs"/>
    <property type="match status" value="1"/>
</dbReference>
<dbReference type="HAMAP" id="MF_01539">
    <property type="entry name" value="TmcAL"/>
    <property type="match status" value="1"/>
</dbReference>
<dbReference type="InterPro" id="IPR014729">
    <property type="entry name" value="Rossmann-like_a/b/a_fold"/>
</dbReference>
<dbReference type="InterPro" id="IPR008513">
    <property type="entry name" value="tRNA(Met)_cyd_acetate_ligase"/>
</dbReference>
<dbReference type="PANTHER" id="PTHR37825">
    <property type="entry name" value="TRNA(MET) CYTIDINE ACETATE LIGASE"/>
    <property type="match status" value="1"/>
</dbReference>
<dbReference type="PANTHER" id="PTHR37825:SF1">
    <property type="entry name" value="TRNA(MET) CYTIDINE ACETATE LIGASE"/>
    <property type="match status" value="1"/>
</dbReference>
<dbReference type="Pfam" id="PF05636">
    <property type="entry name" value="HIGH_NTase1"/>
    <property type="match status" value="1"/>
</dbReference>
<dbReference type="SUPFAM" id="SSF52374">
    <property type="entry name" value="Nucleotidylyl transferase"/>
    <property type="match status" value="1"/>
</dbReference>
<protein>
    <recommendedName>
        <fullName evidence="1">tRNA(Met) cytidine acetate ligase</fullName>
        <ecNumber evidence="1">6.3.4.-</ecNumber>
    </recommendedName>
</protein>
<gene>
    <name evidence="1" type="primary">tmcAL</name>
    <name type="ordered locus">FN0732</name>
</gene>
<comment type="function">
    <text evidence="1">Catalyzes the formation of N(4)-acetylcytidine (ac(4)C) at the wobble position of elongator tRNA(Met), using acetate and ATP as substrates. First activates an acetate ion to form acetyladenylate (Ac-AMP) and then transfers the acetyl group to tRNA to form ac(4)C34.</text>
</comment>
<comment type="catalytic activity">
    <reaction evidence="1">
        <text>cytidine(34) in elongator tRNA(Met) + acetate + ATP = N(4)-acetylcytidine(34) in elongator tRNA(Met) + AMP + diphosphate</text>
        <dbReference type="Rhea" id="RHEA:58144"/>
        <dbReference type="Rhea" id="RHEA-COMP:10693"/>
        <dbReference type="Rhea" id="RHEA-COMP:10694"/>
        <dbReference type="ChEBI" id="CHEBI:30089"/>
        <dbReference type="ChEBI" id="CHEBI:30616"/>
        <dbReference type="ChEBI" id="CHEBI:33019"/>
        <dbReference type="ChEBI" id="CHEBI:74900"/>
        <dbReference type="ChEBI" id="CHEBI:82748"/>
        <dbReference type="ChEBI" id="CHEBI:456215"/>
    </reaction>
</comment>
<comment type="subcellular location">
    <subcellularLocation>
        <location evidence="1">Cytoplasm</location>
    </subcellularLocation>
</comment>
<comment type="similarity">
    <text evidence="1">Belongs to the TmcAL family.</text>
</comment>
<proteinExistence type="inferred from homology"/>
<keyword id="KW-0067">ATP-binding</keyword>
<keyword id="KW-0963">Cytoplasm</keyword>
<keyword id="KW-0436">Ligase</keyword>
<keyword id="KW-0547">Nucleotide-binding</keyword>
<keyword id="KW-1185">Reference proteome</keyword>
<keyword id="KW-0694">RNA-binding</keyword>
<keyword id="KW-0819">tRNA processing</keyword>
<keyword id="KW-0820">tRNA-binding</keyword>
<sequence>MFENVVGLIVEYNPFHNGHLHHIQEIDRLFEDNIKIAVMSGDYVQRGEPSLINKLEKTKIALSQGIDIVIELPTFYSTQSAEIFAKGSVNLLNKLSCSHIVFGSESNDLDKLKRIATISLTKEFELSLREFLAEGFSYPTAFSKVLFDEKLGSNDILALEYLRAIKTINSKIEAYCIKREKTGYYDDEKDNFSSATYIRKILLDSNEKKENKLNKIKNLVPEFSYKILEENFGVFSCLSDFYDLIKYNIIKNCSELKNIQDLEIGLENRLYKYSLENLKFEDFFNEVLTKRITISRLQRILLHSLFNLTENITEKVKNEVPFVKILGFSTKGQKYLNYLKKSKNYNERKILTSNRNLKEILNEEEAKLFNFNELCSQIYRIKSSYINIGYPIIKKD</sequence>
<reference key="1">
    <citation type="journal article" date="2002" name="J. Bacteriol.">
        <title>Genome sequence and analysis of the oral bacterium Fusobacterium nucleatum strain ATCC 25586.</title>
        <authorList>
            <person name="Kapatral V."/>
            <person name="Anderson I."/>
            <person name="Ivanova N."/>
            <person name="Reznik G."/>
            <person name="Los T."/>
            <person name="Lykidis A."/>
            <person name="Bhattacharyya A."/>
            <person name="Bartman A."/>
            <person name="Gardner W."/>
            <person name="Grechkin G."/>
            <person name="Zhu L."/>
            <person name="Vasieva O."/>
            <person name="Chu L."/>
            <person name="Kogan Y."/>
            <person name="Chaga O."/>
            <person name="Goltsman E."/>
            <person name="Bernal A."/>
            <person name="Larsen N."/>
            <person name="D'Souza M."/>
            <person name="Walunas T."/>
            <person name="Pusch G."/>
            <person name="Haselkorn R."/>
            <person name="Fonstein M."/>
            <person name="Kyrpides N.C."/>
            <person name="Overbeek R."/>
        </authorList>
    </citation>
    <scope>NUCLEOTIDE SEQUENCE [LARGE SCALE GENOMIC DNA]</scope>
    <source>
        <strain>ATCC 25586 / DSM 15643 / BCRC 10681 / CIP 101130 / JCM 8532 / KCTC 2640 / LMG 13131 / VPI 4355</strain>
    </source>
</reference>
<evidence type="ECO:0000255" key="1">
    <source>
        <dbReference type="HAMAP-Rule" id="MF_01539"/>
    </source>
</evidence>
<name>TMCAL_FUSNN</name>
<accession>Q8RFG6</accession>